<organism>
    <name type="scientific">Chlorobaculum tepidum (strain ATCC 49652 / DSM 12025 / NBRC 103806 / TLS)</name>
    <name type="common">Chlorobium tepidum</name>
    <dbReference type="NCBI Taxonomy" id="194439"/>
    <lineage>
        <taxon>Bacteria</taxon>
        <taxon>Pseudomonadati</taxon>
        <taxon>Chlorobiota</taxon>
        <taxon>Chlorobiia</taxon>
        <taxon>Chlorobiales</taxon>
        <taxon>Chlorobiaceae</taxon>
        <taxon>Chlorobaculum</taxon>
    </lineage>
</organism>
<reference key="1">
    <citation type="journal article" date="2002" name="Proc. Natl. Acad. Sci. U.S.A.">
        <title>The complete genome sequence of Chlorobium tepidum TLS, a photosynthetic, anaerobic, green-sulfur bacterium.</title>
        <authorList>
            <person name="Eisen J.A."/>
            <person name="Nelson K.E."/>
            <person name="Paulsen I.T."/>
            <person name="Heidelberg J.F."/>
            <person name="Wu M."/>
            <person name="Dodson R.J."/>
            <person name="DeBoy R.T."/>
            <person name="Gwinn M.L."/>
            <person name="Nelson W.C."/>
            <person name="Haft D.H."/>
            <person name="Hickey E.K."/>
            <person name="Peterson J.D."/>
            <person name="Durkin A.S."/>
            <person name="Kolonay J.F."/>
            <person name="Yang F."/>
            <person name="Holt I.E."/>
            <person name="Umayam L.A."/>
            <person name="Mason T.M."/>
            <person name="Brenner M."/>
            <person name="Shea T.P."/>
            <person name="Parksey D.S."/>
            <person name="Nierman W.C."/>
            <person name="Feldblyum T.V."/>
            <person name="Hansen C.L."/>
            <person name="Craven M.B."/>
            <person name="Radune D."/>
            <person name="Vamathevan J.J."/>
            <person name="Khouri H.M."/>
            <person name="White O."/>
            <person name="Gruber T.M."/>
            <person name="Ketchum K.A."/>
            <person name="Venter J.C."/>
            <person name="Tettelin H."/>
            <person name="Bryant D.A."/>
            <person name="Fraser C.M."/>
        </authorList>
    </citation>
    <scope>NUCLEOTIDE SEQUENCE [LARGE SCALE GENOMIC DNA]</scope>
    <source>
        <strain>ATCC 49652 / DSM 12025 / NBRC 103806 / TLS</strain>
    </source>
</reference>
<protein>
    <recommendedName>
        <fullName evidence="1">Serine hydroxymethyltransferase</fullName>
        <shortName evidence="1">SHMT</shortName>
        <shortName evidence="1">Serine methylase</shortName>
        <ecNumber evidence="1">2.1.2.1</ecNumber>
    </recommendedName>
</protein>
<sequence length="440" mass="47448">MDNDILKRLDPEVFEAIANETKRQTETLELIASENFTSKAVMEACGSVMTNKYAEGYPGKRYYGGCEFVDVAENLARDRAKKLFGCEYVNVQPHSGSSANMAVLFAVLKPGDAIMGLDLSHGGHLTHGSKVNFSGQFFDAHSYGVDKETGIIDMNKVEEMARRVKPKLIITGASAYSQGFDFKAFREVADKVGALLMADIAHPAGLVAAGLSANPMPHCHFVTTTTHKTLRGPRGGMIMMGKDFENPLGLTINTKNGSRVKMMSEVIDAEVMPGIQGGPLMHIIAGKAVAFGEALQPEFKAYAQQIKDNAAAMAAKFLAAGYHIVSGGTKNHLMLLDLRNKNVNGKVAENLLHEAGITVNKNMVPFDDKSPFVTSGIRIGTPAMTTRGMKVAEAEKIVEFIDRVISAANDANVADVCKAVRAEVRELCLGFPLNNYGSLV</sequence>
<gene>
    <name evidence="1" type="primary">glyA</name>
    <name type="ordered locus">CT1590</name>
</gene>
<comment type="function">
    <text evidence="1">Catalyzes the reversible interconversion of serine and glycine with tetrahydrofolate (THF) serving as the one-carbon carrier. This reaction serves as the major source of one-carbon groups required for the biosynthesis of purines, thymidylate, methionine, and other important biomolecules. Also exhibits THF-independent aldolase activity toward beta-hydroxyamino acids, producing glycine and aldehydes, via a retro-aldol mechanism.</text>
</comment>
<comment type="catalytic activity">
    <reaction evidence="1">
        <text>(6R)-5,10-methylene-5,6,7,8-tetrahydrofolate + glycine + H2O = (6S)-5,6,7,8-tetrahydrofolate + L-serine</text>
        <dbReference type="Rhea" id="RHEA:15481"/>
        <dbReference type="ChEBI" id="CHEBI:15377"/>
        <dbReference type="ChEBI" id="CHEBI:15636"/>
        <dbReference type="ChEBI" id="CHEBI:33384"/>
        <dbReference type="ChEBI" id="CHEBI:57305"/>
        <dbReference type="ChEBI" id="CHEBI:57453"/>
        <dbReference type="EC" id="2.1.2.1"/>
    </reaction>
</comment>
<comment type="cofactor">
    <cofactor evidence="1">
        <name>pyridoxal 5'-phosphate</name>
        <dbReference type="ChEBI" id="CHEBI:597326"/>
    </cofactor>
</comment>
<comment type="pathway">
    <text evidence="1">One-carbon metabolism; tetrahydrofolate interconversion.</text>
</comment>
<comment type="pathway">
    <text evidence="1">Amino-acid biosynthesis; glycine biosynthesis; glycine from L-serine: step 1/1.</text>
</comment>
<comment type="subunit">
    <text evidence="1">Homodimer.</text>
</comment>
<comment type="subcellular location">
    <subcellularLocation>
        <location evidence="1">Cytoplasm</location>
    </subcellularLocation>
</comment>
<comment type="similarity">
    <text evidence="1">Belongs to the SHMT family.</text>
</comment>
<evidence type="ECO:0000255" key="1">
    <source>
        <dbReference type="HAMAP-Rule" id="MF_00051"/>
    </source>
</evidence>
<accession>Q8KC36</accession>
<keyword id="KW-0028">Amino-acid biosynthesis</keyword>
<keyword id="KW-0963">Cytoplasm</keyword>
<keyword id="KW-0554">One-carbon metabolism</keyword>
<keyword id="KW-0663">Pyridoxal phosphate</keyword>
<keyword id="KW-1185">Reference proteome</keyword>
<keyword id="KW-0808">Transferase</keyword>
<feature type="chain" id="PRO_0000113560" description="Serine hydroxymethyltransferase">
    <location>
        <begin position="1"/>
        <end position="440"/>
    </location>
</feature>
<feature type="binding site" evidence="1">
    <location>
        <position position="119"/>
    </location>
    <ligand>
        <name>(6S)-5,6,7,8-tetrahydrofolate</name>
        <dbReference type="ChEBI" id="CHEBI:57453"/>
    </ligand>
</feature>
<feature type="binding site" evidence="1">
    <location>
        <begin position="123"/>
        <end position="125"/>
    </location>
    <ligand>
        <name>(6S)-5,6,7,8-tetrahydrofolate</name>
        <dbReference type="ChEBI" id="CHEBI:57453"/>
    </ligand>
</feature>
<feature type="binding site" evidence="1">
    <location>
        <begin position="370"/>
        <end position="372"/>
    </location>
    <ligand>
        <name>(6S)-5,6,7,8-tetrahydrofolate</name>
        <dbReference type="ChEBI" id="CHEBI:57453"/>
    </ligand>
</feature>
<feature type="site" description="Plays an important role in substrate specificity" evidence="1">
    <location>
        <position position="227"/>
    </location>
</feature>
<feature type="modified residue" description="N6-(pyridoxal phosphate)lysine" evidence="1">
    <location>
        <position position="228"/>
    </location>
</feature>
<name>GLYA_CHLTE</name>
<dbReference type="EC" id="2.1.2.1" evidence="1"/>
<dbReference type="EMBL" id="AE006470">
    <property type="protein sequence ID" value="AAM72815.1"/>
    <property type="molecule type" value="Genomic_DNA"/>
</dbReference>
<dbReference type="RefSeq" id="NP_662473.1">
    <property type="nucleotide sequence ID" value="NC_002932.3"/>
</dbReference>
<dbReference type="RefSeq" id="WP_010933254.1">
    <property type="nucleotide sequence ID" value="NC_002932.3"/>
</dbReference>
<dbReference type="SMR" id="Q8KC36"/>
<dbReference type="STRING" id="194439.CT1590"/>
<dbReference type="EnsemblBacteria" id="AAM72815">
    <property type="protein sequence ID" value="AAM72815"/>
    <property type="gene ID" value="CT1590"/>
</dbReference>
<dbReference type="KEGG" id="cte:CT1590"/>
<dbReference type="PATRIC" id="fig|194439.7.peg.1436"/>
<dbReference type="eggNOG" id="COG0112">
    <property type="taxonomic scope" value="Bacteria"/>
</dbReference>
<dbReference type="HOGENOM" id="CLU_022477_2_1_10"/>
<dbReference type="OrthoDB" id="9803846at2"/>
<dbReference type="UniPathway" id="UPA00193"/>
<dbReference type="UniPathway" id="UPA00288">
    <property type="reaction ID" value="UER01023"/>
</dbReference>
<dbReference type="Proteomes" id="UP000001007">
    <property type="component" value="Chromosome"/>
</dbReference>
<dbReference type="GO" id="GO:0005829">
    <property type="term" value="C:cytosol"/>
    <property type="evidence" value="ECO:0007669"/>
    <property type="project" value="TreeGrafter"/>
</dbReference>
<dbReference type="GO" id="GO:0004372">
    <property type="term" value="F:glycine hydroxymethyltransferase activity"/>
    <property type="evidence" value="ECO:0007669"/>
    <property type="project" value="UniProtKB-UniRule"/>
</dbReference>
<dbReference type="GO" id="GO:0030170">
    <property type="term" value="F:pyridoxal phosphate binding"/>
    <property type="evidence" value="ECO:0007669"/>
    <property type="project" value="UniProtKB-UniRule"/>
</dbReference>
<dbReference type="GO" id="GO:0019264">
    <property type="term" value="P:glycine biosynthetic process from serine"/>
    <property type="evidence" value="ECO:0007669"/>
    <property type="project" value="UniProtKB-UniRule"/>
</dbReference>
<dbReference type="GO" id="GO:0035999">
    <property type="term" value="P:tetrahydrofolate interconversion"/>
    <property type="evidence" value="ECO:0007669"/>
    <property type="project" value="UniProtKB-UniRule"/>
</dbReference>
<dbReference type="CDD" id="cd00378">
    <property type="entry name" value="SHMT"/>
    <property type="match status" value="1"/>
</dbReference>
<dbReference type="FunFam" id="3.40.640.10:FF:000001">
    <property type="entry name" value="Serine hydroxymethyltransferase"/>
    <property type="match status" value="1"/>
</dbReference>
<dbReference type="Gene3D" id="3.90.1150.10">
    <property type="entry name" value="Aspartate Aminotransferase, domain 1"/>
    <property type="match status" value="1"/>
</dbReference>
<dbReference type="Gene3D" id="3.40.640.10">
    <property type="entry name" value="Type I PLP-dependent aspartate aminotransferase-like (Major domain)"/>
    <property type="match status" value="1"/>
</dbReference>
<dbReference type="HAMAP" id="MF_00051">
    <property type="entry name" value="SHMT"/>
    <property type="match status" value="1"/>
</dbReference>
<dbReference type="InterPro" id="IPR015424">
    <property type="entry name" value="PyrdxlP-dep_Trfase"/>
</dbReference>
<dbReference type="InterPro" id="IPR015421">
    <property type="entry name" value="PyrdxlP-dep_Trfase_major"/>
</dbReference>
<dbReference type="InterPro" id="IPR015422">
    <property type="entry name" value="PyrdxlP-dep_Trfase_small"/>
</dbReference>
<dbReference type="InterPro" id="IPR001085">
    <property type="entry name" value="Ser_HO-MeTrfase"/>
</dbReference>
<dbReference type="InterPro" id="IPR049943">
    <property type="entry name" value="Ser_HO-MeTrfase-like"/>
</dbReference>
<dbReference type="InterPro" id="IPR019798">
    <property type="entry name" value="Ser_HO-MeTrfase_PLP_BS"/>
</dbReference>
<dbReference type="InterPro" id="IPR039429">
    <property type="entry name" value="SHMT-like_dom"/>
</dbReference>
<dbReference type="NCBIfam" id="NF000586">
    <property type="entry name" value="PRK00011.1"/>
    <property type="match status" value="1"/>
</dbReference>
<dbReference type="PANTHER" id="PTHR11680">
    <property type="entry name" value="SERINE HYDROXYMETHYLTRANSFERASE"/>
    <property type="match status" value="1"/>
</dbReference>
<dbReference type="PANTHER" id="PTHR11680:SF35">
    <property type="entry name" value="SERINE HYDROXYMETHYLTRANSFERASE 1"/>
    <property type="match status" value="1"/>
</dbReference>
<dbReference type="Pfam" id="PF00464">
    <property type="entry name" value="SHMT"/>
    <property type="match status" value="1"/>
</dbReference>
<dbReference type="PIRSF" id="PIRSF000412">
    <property type="entry name" value="SHMT"/>
    <property type="match status" value="1"/>
</dbReference>
<dbReference type="SUPFAM" id="SSF53383">
    <property type="entry name" value="PLP-dependent transferases"/>
    <property type="match status" value="1"/>
</dbReference>
<dbReference type="PROSITE" id="PS00096">
    <property type="entry name" value="SHMT"/>
    <property type="match status" value="1"/>
</dbReference>
<proteinExistence type="inferred from homology"/>